<sequence length="314" mass="34160">MIFIYIFLFLSSAIIDSNGFAMAQKLEAKGGKGGKEWDDGAGHDNVAKVYIRGGLEGIQYIKFDYVKDGQSVEGSIHGVSGSGFTQMFEIDYQNGEHIVSVDGYFDKSGVMQALEFKTNRKTSEVIGYPKSNTKFSLGGVNGKMINGFHGSAGKALNSIGAYLTKVPPTKSELVGGWGGDYWDDGPNYDGVRKVYVTYMNTCIRSINIDYEKDGQVVTSSHGNKEGETEEFAIDYPNEFLISVEGTYDSILFPDHYVLVITSLSFKTSKGRISPTYGVVSGTKFVLESQGNAIVGFYGRNGGAFDAIGVYFSPI</sequence>
<dbReference type="EMBL" id="AC006216">
    <property type="protein sequence ID" value="AAD12680.1"/>
    <property type="status" value="ALT_SEQ"/>
    <property type="molecule type" value="Genomic_DNA"/>
</dbReference>
<dbReference type="EMBL" id="CP002684">
    <property type="protein sequence ID" value="AEE32751.1"/>
    <property type="molecule type" value="Genomic_DNA"/>
</dbReference>
<dbReference type="PIR" id="D96560">
    <property type="entry name" value="D96560"/>
</dbReference>
<dbReference type="RefSeq" id="NP_175618.2">
    <property type="nucleotide sequence ID" value="NM_104087.3"/>
</dbReference>
<dbReference type="SMR" id="F4IB95"/>
<dbReference type="FunCoup" id="F4IB95">
    <property type="interactions" value="23"/>
</dbReference>
<dbReference type="STRING" id="3702.F4IB95"/>
<dbReference type="PaxDb" id="3702-AT1G52060.1"/>
<dbReference type="ProteomicsDB" id="232266"/>
<dbReference type="EnsemblPlants" id="AT1G52060.1">
    <property type="protein sequence ID" value="AT1G52060.1"/>
    <property type="gene ID" value="AT1G52060"/>
</dbReference>
<dbReference type="GeneID" id="841635"/>
<dbReference type="Gramene" id="AT1G52060.1">
    <property type="protein sequence ID" value="AT1G52060.1"/>
    <property type="gene ID" value="AT1G52060"/>
</dbReference>
<dbReference type="KEGG" id="ath:AT1G52060"/>
<dbReference type="Araport" id="AT1G52060"/>
<dbReference type="TAIR" id="AT1G52060"/>
<dbReference type="HOGENOM" id="CLU_019384_1_0_1"/>
<dbReference type="InParanoid" id="F4IB95"/>
<dbReference type="OMA" id="ITYISTC"/>
<dbReference type="PRO" id="PR:F4IB95"/>
<dbReference type="Proteomes" id="UP000006548">
    <property type="component" value="Chromosome 1"/>
</dbReference>
<dbReference type="ExpressionAtlas" id="F4IB95">
    <property type="expression patterns" value="baseline and differential"/>
</dbReference>
<dbReference type="GO" id="GO:0030246">
    <property type="term" value="F:carbohydrate binding"/>
    <property type="evidence" value="ECO:0007669"/>
    <property type="project" value="UniProtKB-KW"/>
</dbReference>
<dbReference type="CDD" id="cd09612">
    <property type="entry name" value="Jacalin"/>
    <property type="match status" value="2"/>
</dbReference>
<dbReference type="FunFam" id="2.100.10.30:FF:000001">
    <property type="entry name" value="Jacalin-related lectin 33"/>
    <property type="match status" value="2"/>
</dbReference>
<dbReference type="Gene3D" id="2.100.10.30">
    <property type="entry name" value="Jacalin-like lectin domain"/>
    <property type="match status" value="2"/>
</dbReference>
<dbReference type="InterPro" id="IPR001229">
    <property type="entry name" value="Jacalin-like_lectin_dom"/>
</dbReference>
<dbReference type="InterPro" id="IPR033734">
    <property type="entry name" value="Jacalin-like_lectin_dom_plant"/>
</dbReference>
<dbReference type="InterPro" id="IPR036404">
    <property type="entry name" value="Jacalin-like_lectin_dom_sf"/>
</dbReference>
<dbReference type="PANTHER" id="PTHR47293:SF52">
    <property type="entry name" value="JACALIN-RELATED LECTIN 10-RELATED"/>
    <property type="match status" value="1"/>
</dbReference>
<dbReference type="PANTHER" id="PTHR47293">
    <property type="entry name" value="JACALIN-RELATED LECTIN 3"/>
    <property type="match status" value="1"/>
</dbReference>
<dbReference type="Pfam" id="PF01419">
    <property type="entry name" value="Jacalin"/>
    <property type="match status" value="2"/>
</dbReference>
<dbReference type="SMART" id="SM00915">
    <property type="entry name" value="Jacalin"/>
    <property type="match status" value="2"/>
</dbReference>
<dbReference type="SUPFAM" id="SSF51101">
    <property type="entry name" value="Mannose-binding lectins"/>
    <property type="match status" value="2"/>
</dbReference>
<dbReference type="PROSITE" id="PS51752">
    <property type="entry name" value="JACALIN_LECTIN"/>
    <property type="match status" value="2"/>
</dbReference>
<proteinExistence type="inferred from homology"/>
<name>JAL9_ARATH</name>
<organism>
    <name type="scientific">Arabidopsis thaliana</name>
    <name type="common">Mouse-ear cress</name>
    <dbReference type="NCBI Taxonomy" id="3702"/>
    <lineage>
        <taxon>Eukaryota</taxon>
        <taxon>Viridiplantae</taxon>
        <taxon>Streptophyta</taxon>
        <taxon>Embryophyta</taxon>
        <taxon>Tracheophyta</taxon>
        <taxon>Spermatophyta</taxon>
        <taxon>Magnoliopsida</taxon>
        <taxon>eudicotyledons</taxon>
        <taxon>Gunneridae</taxon>
        <taxon>Pentapetalae</taxon>
        <taxon>rosids</taxon>
        <taxon>malvids</taxon>
        <taxon>Brassicales</taxon>
        <taxon>Brassicaceae</taxon>
        <taxon>Camelineae</taxon>
        <taxon>Arabidopsis</taxon>
    </lineage>
</organism>
<evidence type="ECO:0000255" key="1"/>
<evidence type="ECO:0000255" key="2">
    <source>
        <dbReference type="PROSITE-ProRule" id="PRU01088"/>
    </source>
</evidence>
<evidence type="ECO:0000305" key="3"/>
<comment type="similarity">
    <text evidence="2 3">Belongs to the jacalin lectin family.</text>
</comment>
<comment type="sequence caution" evidence="3">
    <conflict type="erroneous gene model prediction">
        <sequence resource="EMBL-CDS" id="AAD12680"/>
    </conflict>
</comment>
<protein>
    <recommendedName>
        <fullName>Jacalin-related lectin 9</fullName>
    </recommendedName>
</protein>
<keyword id="KW-0430">Lectin</keyword>
<keyword id="KW-1185">Reference proteome</keyword>
<keyword id="KW-0677">Repeat</keyword>
<keyword id="KW-0732">Signal</keyword>
<reference key="1">
    <citation type="journal article" date="2000" name="Nature">
        <title>Sequence and analysis of chromosome 1 of the plant Arabidopsis thaliana.</title>
        <authorList>
            <person name="Theologis A."/>
            <person name="Ecker J.R."/>
            <person name="Palm C.J."/>
            <person name="Federspiel N.A."/>
            <person name="Kaul S."/>
            <person name="White O."/>
            <person name="Alonso J."/>
            <person name="Altafi H."/>
            <person name="Araujo R."/>
            <person name="Bowman C.L."/>
            <person name="Brooks S.Y."/>
            <person name="Buehler E."/>
            <person name="Chan A."/>
            <person name="Chao Q."/>
            <person name="Chen H."/>
            <person name="Cheuk R.F."/>
            <person name="Chin C.W."/>
            <person name="Chung M.K."/>
            <person name="Conn L."/>
            <person name="Conway A.B."/>
            <person name="Conway A.R."/>
            <person name="Creasy T.H."/>
            <person name="Dewar K."/>
            <person name="Dunn P."/>
            <person name="Etgu P."/>
            <person name="Feldblyum T.V."/>
            <person name="Feng J.-D."/>
            <person name="Fong B."/>
            <person name="Fujii C.Y."/>
            <person name="Gill J.E."/>
            <person name="Goldsmith A.D."/>
            <person name="Haas B."/>
            <person name="Hansen N.F."/>
            <person name="Hughes B."/>
            <person name="Huizar L."/>
            <person name="Hunter J.L."/>
            <person name="Jenkins J."/>
            <person name="Johnson-Hopson C."/>
            <person name="Khan S."/>
            <person name="Khaykin E."/>
            <person name="Kim C.J."/>
            <person name="Koo H.L."/>
            <person name="Kremenetskaia I."/>
            <person name="Kurtz D.B."/>
            <person name="Kwan A."/>
            <person name="Lam B."/>
            <person name="Langin-Hooper S."/>
            <person name="Lee A."/>
            <person name="Lee J.M."/>
            <person name="Lenz C.A."/>
            <person name="Li J.H."/>
            <person name="Li Y.-P."/>
            <person name="Lin X."/>
            <person name="Liu S.X."/>
            <person name="Liu Z.A."/>
            <person name="Luros J.S."/>
            <person name="Maiti R."/>
            <person name="Marziali A."/>
            <person name="Militscher J."/>
            <person name="Miranda M."/>
            <person name="Nguyen M."/>
            <person name="Nierman W.C."/>
            <person name="Osborne B.I."/>
            <person name="Pai G."/>
            <person name="Peterson J."/>
            <person name="Pham P.K."/>
            <person name="Rizzo M."/>
            <person name="Rooney T."/>
            <person name="Rowley D."/>
            <person name="Sakano H."/>
            <person name="Salzberg S.L."/>
            <person name="Schwartz J.R."/>
            <person name="Shinn P."/>
            <person name="Southwick A.M."/>
            <person name="Sun H."/>
            <person name="Tallon L.J."/>
            <person name="Tambunga G."/>
            <person name="Toriumi M.J."/>
            <person name="Town C.D."/>
            <person name="Utterback T."/>
            <person name="Van Aken S."/>
            <person name="Vaysberg M."/>
            <person name="Vysotskaia V.S."/>
            <person name="Walker M."/>
            <person name="Wu D."/>
            <person name="Yu G."/>
            <person name="Fraser C.M."/>
            <person name="Venter J.C."/>
            <person name="Davis R.W."/>
        </authorList>
    </citation>
    <scope>NUCLEOTIDE SEQUENCE [LARGE SCALE GENOMIC DNA]</scope>
    <source>
        <strain>cv. Columbia</strain>
    </source>
</reference>
<reference key="2">
    <citation type="journal article" date="2017" name="Plant J.">
        <title>Araport11: a complete reannotation of the Arabidopsis thaliana reference genome.</title>
        <authorList>
            <person name="Cheng C.Y."/>
            <person name="Krishnakumar V."/>
            <person name="Chan A.P."/>
            <person name="Thibaud-Nissen F."/>
            <person name="Schobel S."/>
            <person name="Town C.D."/>
        </authorList>
    </citation>
    <scope>GENOME REANNOTATION</scope>
    <source>
        <strain>cv. Columbia</strain>
    </source>
</reference>
<reference key="3">
    <citation type="journal article" date="2008" name="Plant Cell Physiol.">
        <title>Antagonistic jacalin-related lectins regulate the size of ER body-type beta-glucosidase complexes in Arabidopsis thaliana.</title>
        <authorList>
            <person name="Nagano A.J."/>
            <person name="Fukao Y."/>
            <person name="Fujiwara M."/>
            <person name="Nishimura M."/>
            <person name="Hara-Nishimura I."/>
        </authorList>
    </citation>
    <scope>GENE FAMILY</scope>
    <scope>NOMENCLATURE</scope>
</reference>
<feature type="signal peptide" evidence="1">
    <location>
        <begin position="1"/>
        <end position="23"/>
    </location>
</feature>
<feature type="chain" id="PRO_0000430376" description="Jacalin-related lectin 9">
    <location>
        <begin position="24"/>
        <end position="314"/>
    </location>
</feature>
<feature type="domain" description="Jacalin-type lectin 1" evidence="2">
    <location>
        <begin position="24"/>
        <end position="165"/>
    </location>
</feature>
<feature type="domain" description="Jacalin-type lectin 2" evidence="2">
    <location>
        <begin position="168"/>
        <end position="313"/>
    </location>
</feature>
<gene>
    <name type="primary">JAL9</name>
    <name type="ordered locus">At1g52060</name>
    <name type="ORF">F5F19.12</name>
</gene>
<accession>F4IB95</accession>
<accession>Q9ZU19</accession>